<reference key="1">
    <citation type="journal article" date="2005" name="Nucleic Acids Res.">
        <title>Genome dynamics and diversity of Shigella species, the etiologic agents of bacillary dysentery.</title>
        <authorList>
            <person name="Yang F."/>
            <person name="Yang J."/>
            <person name="Zhang X."/>
            <person name="Chen L."/>
            <person name="Jiang Y."/>
            <person name="Yan Y."/>
            <person name="Tang X."/>
            <person name="Wang J."/>
            <person name="Xiong Z."/>
            <person name="Dong J."/>
            <person name="Xue Y."/>
            <person name="Zhu Y."/>
            <person name="Xu X."/>
            <person name="Sun L."/>
            <person name="Chen S."/>
            <person name="Nie H."/>
            <person name="Peng J."/>
            <person name="Xu J."/>
            <person name="Wang Y."/>
            <person name="Yuan Z."/>
            <person name="Wen Y."/>
            <person name="Yao Z."/>
            <person name="Shen Y."/>
            <person name="Qiang B."/>
            <person name="Hou Y."/>
            <person name="Yu J."/>
            <person name="Jin Q."/>
        </authorList>
    </citation>
    <scope>NUCLEOTIDE SEQUENCE [LARGE SCALE GENOMIC DNA]</scope>
    <source>
        <strain>Sd197</strain>
    </source>
</reference>
<name>RSMG_SHIDS</name>
<protein>
    <recommendedName>
        <fullName evidence="1">Ribosomal RNA small subunit methyltransferase G</fullName>
        <ecNumber evidence="1">2.1.1.170</ecNumber>
    </recommendedName>
    <alternativeName>
        <fullName evidence="1">16S rRNA 7-methylguanosine methyltransferase</fullName>
        <shortName evidence="1">16S rRNA m7G methyltransferase</shortName>
    </alternativeName>
</protein>
<keyword id="KW-0963">Cytoplasm</keyword>
<keyword id="KW-0489">Methyltransferase</keyword>
<keyword id="KW-1185">Reference proteome</keyword>
<keyword id="KW-0698">rRNA processing</keyword>
<keyword id="KW-0949">S-adenosyl-L-methionine</keyword>
<keyword id="KW-0808">Transferase</keyword>
<sequence>MLNKLSLLLKDAGIPLTDHQKNQLIAYVNMLHKWNKAYNLTSVRDPNEMLVRHILDSIVVAPYLQGERFIDVGTGPGLPGIPLSIVRPEAHFTLLDSLGKRVRFLRQVQHELKLENIEPVQSRVEEFPSEPPFDGVISRAFASLNDMVSWCHHLPGEQGRFYALKGQMPEDEIALLHEEYQVESVVKLQVPALDGERHLVVIKANKI</sequence>
<accession>Q329S9</accession>
<evidence type="ECO:0000255" key="1">
    <source>
        <dbReference type="HAMAP-Rule" id="MF_00074"/>
    </source>
</evidence>
<gene>
    <name evidence="1" type="primary">rsmG</name>
    <name type="ordered locus">SDY_4008</name>
</gene>
<comment type="function">
    <text evidence="1">Specifically methylates the N7 position of guanine in position 527 of 16S rRNA.</text>
</comment>
<comment type="catalytic activity">
    <reaction evidence="1">
        <text>guanosine(527) in 16S rRNA + S-adenosyl-L-methionine = N(7)-methylguanosine(527) in 16S rRNA + S-adenosyl-L-homocysteine</text>
        <dbReference type="Rhea" id="RHEA:42732"/>
        <dbReference type="Rhea" id="RHEA-COMP:10209"/>
        <dbReference type="Rhea" id="RHEA-COMP:10210"/>
        <dbReference type="ChEBI" id="CHEBI:57856"/>
        <dbReference type="ChEBI" id="CHEBI:59789"/>
        <dbReference type="ChEBI" id="CHEBI:74269"/>
        <dbReference type="ChEBI" id="CHEBI:74480"/>
        <dbReference type="EC" id="2.1.1.170"/>
    </reaction>
</comment>
<comment type="subcellular location">
    <subcellularLocation>
        <location evidence="1">Cytoplasm</location>
    </subcellularLocation>
</comment>
<comment type="similarity">
    <text evidence="1">Belongs to the methyltransferase superfamily. RNA methyltransferase RsmG family.</text>
</comment>
<proteinExistence type="inferred from homology"/>
<feature type="chain" id="PRO_1000010208" description="Ribosomal RNA small subunit methyltransferase G">
    <location>
        <begin position="1"/>
        <end position="207"/>
    </location>
</feature>
<feature type="binding site" evidence="1">
    <location>
        <position position="73"/>
    </location>
    <ligand>
        <name>S-adenosyl-L-methionine</name>
        <dbReference type="ChEBI" id="CHEBI:59789"/>
    </ligand>
</feature>
<feature type="binding site" evidence="1">
    <location>
        <position position="78"/>
    </location>
    <ligand>
        <name>S-adenosyl-L-methionine</name>
        <dbReference type="ChEBI" id="CHEBI:59789"/>
    </ligand>
</feature>
<feature type="binding site" evidence="1">
    <location>
        <begin position="124"/>
        <end position="125"/>
    </location>
    <ligand>
        <name>S-adenosyl-L-methionine</name>
        <dbReference type="ChEBI" id="CHEBI:59789"/>
    </ligand>
</feature>
<feature type="binding site" evidence="1">
    <location>
        <position position="139"/>
    </location>
    <ligand>
        <name>S-adenosyl-L-methionine</name>
        <dbReference type="ChEBI" id="CHEBI:59789"/>
    </ligand>
</feature>
<dbReference type="EC" id="2.1.1.170" evidence="1"/>
<dbReference type="EMBL" id="CP000034">
    <property type="protein sequence ID" value="ABB63926.1"/>
    <property type="molecule type" value="Genomic_DNA"/>
</dbReference>
<dbReference type="RefSeq" id="WP_000932830.1">
    <property type="nucleotide sequence ID" value="NC_007606.1"/>
</dbReference>
<dbReference type="RefSeq" id="YP_405417.1">
    <property type="nucleotide sequence ID" value="NC_007606.1"/>
</dbReference>
<dbReference type="SMR" id="Q329S9"/>
<dbReference type="STRING" id="300267.SDY_4008"/>
<dbReference type="EnsemblBacteria" id="ABB63926">
    <property type="protein sequence ID" value="ABB63926"/>
    <property type="gene ID" value="SDY_4008"/>
</dbReference>
<dbReference type="KEGG" id="sdy:SDY_4008"/>
<dbReference type="PATRIC" id="fig|300267.13.peg.4720"/>
<dbReference type="HOGENOM" id="CLU_065341_2_2_6"/>
<dbReference type="Proteomes" id="UP000002716">
    <property type="component" value="Chromosome"/>
</dbReference>
<dbReference type="GO" id="GO:0005829">
    <property type="term" value="C:cytosol"/>
    <property type="evidence" value="ECO:0007669"/>
    <property type="project" value="TreeGrafter"/>
</dbReference>
<dbReference type="GO" id="GO:0070043">
    <property type="term" value="F:rRNA (guanine-N7-)-methyltransferase activity"/>
    <property type="evidence" value="ECO:0007669"/>
    <property type="project" value="UniProtKB-UniRule"/>
</dbReference>
<dbReference type="CDD" id="cd02440">
    <property type="entry name" value="AdoMet_MTases"/>
    <property type="match status" value="1"/>
</dbReference>
<dbReference type="FunFam" id="3.40.50.150:FF:000032">
    <property type="entry name" value="Ribosomal RNA small subunit methyltransferase G"/>
    <property type="match status" value="1"/>
</dbReference>
<dbReference type="Gene3D" id="3.40.50.150">
    <property type="entry name" value="Vaccinia Virus protein VP39"/>
    <property type="match status" value="1"/>
</dbReference>
<dbReference type="HAMAP" id="MF_00074">
    <property type="entry name" value="16SrRNA_methyltr_G"/>
    <property type="match status" value="1"/>
</dbReference>
<dbReference type="InterPro" id="IPR003682">
    <property type="entry name" value="rRNA_ssu_MeTfrase_G"/>
</dbReference>
<dbReference type="InterPro" id="IPR029063">
    <property type="entry name" value="SAM-dependent_MTases_sf"/>
</dbReference>
<dbReference type="NCBIfam" id="TIGR00138">
    <property type="entry name" value="rsmG_gidB"/>
    <property type="match status" value="1"/>
</dbReference>
<dbReference type="PANTHER" id="PTHR31760">
    <property type="entry name" value="S-ADENOSYL-L-METHIONINE-DEPENDENT METHYLTRANSFERASES SUPERFAMILY PROTEIN"/>
    <property type="match status" value="1"/>
</dbReference>
<dbReference type="PANTHER" id="PTHR31760:SF0">
    <property type="entry name" value="S-ADENOSYL-L-METHIONINE-DEPENDENT METHYLTRANSFERASES SUPERFAMILY PROTEIN"/>
    <property type="match status" value="1"/>
</dbReference>
<dbReference type="Pfam" id="PF02527">
    <property type="entry name" value="GidB"/>
    <property type="match status" value="1"/>
</dbReference>
<dbReference type="PIRSF" id="PIRSF003078">
    <property type="entry name" value="GidB"/>
    <property type="match status" value="1"/>
</dbReference>
<dbReference type="SUPFAM" id="SSF53335">
    <property type="entry name" value="S-adenosyl-L-methionine-dependent methyltransferases"/>
    <property type="match status" value="1"/>
</dbReference>
<organism>
    <name type="scientific">Shigella dysenteriae serotype 1 (strain Sd197)</name>
    <dbReference type="NCBI Taxonomy" id="300267"/>
    <lineage>
        <taxon>Bacteria</taxon>
        <taxon>Pseudomonadati</taxon>
        <taxon>Pseudomonadota</taxon>
        <taxon>Gammaproteobacteria</taxon>
        <taxon>Enterobacterales</taxon>
        <taxon>Enterobacteriaceae</taxon>
        <taxon>Shigella</taxon>
    </lineage>
</organism>